<accession>B5XZP5</accession>
<proteinExistence type="inferred from homology"/>
<sequence>MDSQRNLLIIALLFVSFMIWQAWEQDKNPQPQQQTTQTTTTAAGSAADQGVPASGQGKLITVKTDVLELTINTNGGDIEQALLLAYPKTLKSTEPFQLLETTPQFVYQAQSGLTGRDGPDNPANGPRPLYSVDKEAFVLADSQDEIVIPLTYTDKAGNVFTKTFTLKRGGYAVNVGYSVQNASEKPLEVSTFGQLKQTAALPTSRDTQTGGLSTMHTFRGAAFSTSDTKYEKYKFDTILDNENLNVSTKNGWVAMLQQYFTTAWVPQNNGTNNFYTANLGNGIVAIGYKSQPVLVQPGQTDKLQSVLWVGPAIQDKMAAVAPHLDLTVDYGWLWFISQPLFKLLKFIHSFLGNWGFSIIVITFIVRGIMYPLTKAQYTSMAKMRMLQPKIQAMRERLGDDKQRQSQEMMALYKAEKVNPLGGCFPLIIQMPIFLALYYMLSASVELRHAPFILWIHDLSAQDPYYILPIIMGATMFFIQKMSPTTVTDPMQQKIMTFMPVIFTVFFLWFPSGLVVYYIVSNLVTIIQQQLIYRGLEKRGLHSREKKKS</sequence>
<evidence type="ECO:0000255" key="1">
    <source>
        <dbReference type="HAMAP-Rule" id="MF_01810"/>
    </source>
</evidence>
<evidence type="ECO:0000256" key="2">
    <source>
        <dbReference type="SAM" id="MobiDB-lite"/>
    </source>
</evidence>
<gene>
    <name evidence="1" type="primary">yidC</name>
    <name type="ordered locus">KPK_5565</name>
</gene>
<comment type="function">
    <text evidence="1">Required for the insertion and/or proper folding and/or complex formation of integral membrane proteins into the membrane. Involved in integration of membrane proteins that insert both dependently and independently of the Sec translocase complex, as well as at least some lipoproteins. Aids folding of multispanning membrane proteins.</text>
</comment>
<comment type="subunit">
    <text evidence="1">Interacts with the Sec translocase complex via SecD. Specifically interacts with transmembrane segments of nascent integral membrane proteins during membrane integration.</text>
</comment>
<comment type="subcellular location">
    <subcellularLocation>
        <location evidence="1">Cell inner membrane</location>
        <topology evidence="1">Multi-pass membrane protein</topology>
    </subcellularLocation>
</comment>
<comment type="similarity">
    <text evidence="1">Belongs to the OXA1/ALB3/YidC family. Type 1 subfamily.</text>
</comment>
<name>YIDC_KLEP3</name>
<keyword id="KW-0997">Cell inner membrane</keyword>
<keyword id="KW-1003">Cell membrane</keyword>
<keyword id="KW-0143">Chaperone</keyword>
<keyword id="KW-0472">Membrane</keyword>
<keyword id="KW-0653">Protein transport</keyword>
<keyword id="KW-0812">Transmembrane</keyword>
<keyword id="KW-1133">Transmembrane helix</keyword>
<keyword id="KW-0813">Transport</keyword>
<organism>
    <name type="scientific">Klebsiella pneumoniae (strain 342)</name>
    <dbReference type="NCBI Taxonomy" id="507522"/>
    <lineage>
        <taxon>Bacteria</taxon>
        <taxon>Pseudomonadati</taxon>
        <taxon>Pseudomonadota</taxon>
        <taxon>Gammaproteobacteria</taxon>
        <taxon>Enterobacterales</taxon>
        <taxon>Enterobacteriaceae</taxon>
        <taxon>Klebsiella/Raoultella group</taxon>
        <taxon>Klebsiella</taxon>
        <taxon>Klebsiella pneumoniae complex</taxon>
    </lineage>
</organism>
<reference key="1">
    <citation type="journal article" date="2008" name="PLoS Genet.">
        <title>Complete genome sequence of the N2-fixing broad host range endophyte Klebsiella pneumoniae 342 and virulence predictions verified in mice.</title>
        <authorList>
            <person name="Fouts D.E."/>
            <person name="Tyler H.L."/>
            <person name="DeBoy R.T."/>
            <person name="Daugherty S."/>
            <person name="Ren Q."/>
            <person name="Badger J.H."/>
            <person name="Durkin A.S."/>
            <person name="Huot H."/>
            <person name="Shrivastava S."/>
            <person name="Kothari S."/>
            <person name="Dodson R.J."/>
            <person name="Mohamoud Y."/>
            <person name="Khouri H."/>
            <person name="Roesch L.F.W."/>
            <person name="Krogfelt K.A."/>
            <person name="Struve C."/>
            <person name="Triplett E.W."/>
            <person name="Methe B.A."/>
        </authorList>
    </citation>
    <scope>NUCLEOTIDE SEQUENCE [LARGE SCALE GENOMIC DNA]</scope>
    <source>
        <strain>342</strain>
    </source>
</reference>
<feature type="chain" id="PRO_1000187674" description="Membrane protein insertase YidC">
    <location>
        <begin position="1"/>
        <end position="548"/>
    </location>
</feature>
<feature type="transmembrane region" description="Helical" evidence="1">
    <location>
        <begin position="6"/>
        <end position="26"/>
    </location>
</feature>
<feature type="transmembrane region" description="Helical" evidence="1">
    <location>
        <begin position="345"/>
        <end position="365"/>
    </location>
</feature>
<feature type="transmembrane region" description="Helical" evidence="1">
    <location>
        <begin position="420"/>
        <end position="440"/>
    </location>
</feature>
<feature type="transmembrane region" description="Helical" evidence="1">
    <location>
        <begin position="458"/>
        <end position="478"/>
    </location>
</feature>
<feature type="transmembrane region" description="Helical" evidence="1">
    <location>
        <begin position="499"/>
        <end position="519"/>
    </location>
</feature>
<feature type="region of interest" description="Disordered" evidence="2">
    <location>
        <begin position="28"/>
        <end position="52"/>
    </location>
</feature>
<feature type="compositionally biased region" description="Low complexity" evidence="2">
    <location>
        <begin position="29"/>
        <end position="41"/>
    </location>
</feature>
<protein>
    <recommendedName>
        <fullName evidence="1">Membrane protein insertase YidC</fullName>
    </recommendedName>
    <alternativeName>
        <fullName evidence="1">Foldase YidC</fullName>
    </alternativeName>
    <alternativeName>
        <fullName evidence="1">Membrane integrase YidC</fullName>
    </alternativeName>
    <alternativeName>
        <fullName evidence="1">Membrane protein YidC</fullName>
    </alternativeName>
</protein>
<dbReference type="EMBL" id="CP000964">
    <property type="protein sequence ID" value="ACI06621.1"/>
    <property type="molecule type" value="Genomic_DNA"/>
</dbReference>
<dbReference type="SMR" id="B5XZP5"/>
<dbReference type="KEGG" id="kpe:KPK_5565"/>
<dbReference type="HOGENOM" id="CLU_016535_3_0_6"/>
<dbReference type="Proteomes" id="UP000001734">
    <property type="component" value="Chromosome"/>
</dbReference>
<dbReference type="GO" id="GO:0005886">
    <property type="term" value="C:plasma membrane"/>
    <property type="evidence" value="ECO:0007669"/>
    <property type="project" value="UniProtKB-SubCell"/>
</dbReference>
<dbReference type="GO" id="GO:0032977">
    <property type="term" value="F:membrane insertase activity"/>
    <property type="evidence" value="ECO:0007669"/>
    <property type="project" value="InterPro"/>
</dbReference>
<dbReference type="GO" id="GO:0051205">
    <property type="term" value="P:protein insertion into membrane"/>
    <property type="evidence" value="ECO:0007669"/>
    <property type="project" value="TreeGrafter"/>
</dbReference>
<dbReference type="GO" id="GO:0015031">
    <property type="term" value="P:protein transport"/>
    <property type="evidence" value="ECO:0007669"/>
    <property type="project" value="UniProtKB-KW"/>
</dbReference>
<dbReference type="CDD" id="cd20070">
    <property type="entry name" value="5TM_YidC_Alb3"/>
    <property type="match status" value="1"/>
</dbReference>
<dbReference type="CDD" id="cd19961">
    <property type="entry name" value="EcYidC-like_peri"/>
    <property type="match status" value="1"/>
</dbReference>
<dbReference type="FunFam" id="2.70.98.90:FF:000001">
    <property type="entry name" value="Membrane protein insertase YidC"/>
    <property type="match status" value="1"/>
</dbReference>
<dbReference type="Gene3D" id="2.70.98.90">
    <property type="match status" value="1"/>
</dbReference>
<dbReference type="HAMAP" id="MF_01810">
    <property type="entry name" value="YidC_type1"/>
    <property type="match status" value="1"/>
</dbReference>
<dbReference type="InterPro" id="IPR019998">
    <property type="entry name" value="Membr_insert_YidC"/>
</dbReference>
<dbReference type="InterPro" id="IPR028053">
    <property type="entry name" value="Membr_insert_YidC_N"/>
</dbReference>
<dbReference type="InterPro" id="IPR001708">
    <property type="entry name" value="YidC/ALB3/OXA1/COX18"/>
</dbReference>
<dbReference type="InterPro" id="IPR028055">
    <property type="entry name" value="YidC/Oxa/ALB_C"/>
</dbReference>
<dbReference type="InterPro" id="IPR047196">
    <property type="entry name" value="YidC_ALB_C"/>
</dbReference>
<dbReference type="InterPro" id="IPR038221">
    <property type="entry name" value="YidC_periplasmic_sf"/>
</dbReference>
<dbReference type="NCBIfam" id="NF002351">
    <property type="entry name" value="PRK01318.1-1"/>
    <property type="match status" value="1"/>
</dbReference>
<dbReference type="NCBIfam" id="NF002352">
    <property type="entry name" value="PRK01318.1-3"/>
    <property type="match status" value="1"/>
</dbReference>
<dbReference type="NCBIfam" id="NF002353">
    <property type="entry name" value="PRK01318.1-4"/>
    <property type="match status" value="1"/>
</dbReference>
<dbReference type="NCBIfam" id="TIGR03593">
    <property type="entry name" value="yidC_nterm"/>
    <property type="match status" value="1"/>
</dbReference>
<dbReference type="NCBIfam" id="TIGR03592">
    <property type="entry name" value="yidC_oxa1_cterm"/>
    <property type="match status" value="1"/>
</dbReference>
<dbReference type="PANTHER" id="PTHR12428:SF65">
    <property type="entry name" value="CYTOCHROME C OXIDASE ASSEMBLY PROTEIN COX18, MITOCHONDRIAL"/>
    <property type="match status" value="1"/>
</dbReference>
<dbReference type="PANTHER" id="PTHR12428">
    <property type="entry name" value="OXA1"/>
    <property type="match status" value="1"/>
</dbReference>
<dbReference type="Pfam" id="PF02096">
    <property type="entry name" value="60KD_IMP"/>
    <property type="match status" value="1"/>
</dbReference>
<dbReference type="Pfam" id="PF14849">
    <property type="entry name" value="YidC_periplas"/>
    <property type="match status" value="1"/>
</dbReference>
<dbReference type="PRINTS" id="PR00701">
    <property type="entry name" value="60KDINNERMP"/>
</dbReference>
<dbReference type="PRINTS" id="PR01900">
    <property type="entry name" value="YIDCPROTEIN"/>
</dbReference>